<evidence type="ECO:0000255" key="1"/>
<evidence type="ECO:0000256" key="2">
    <source>
        <dbReference type="SAM" id="MobiDB-lite"/>
    </source>
</evidence>
<evidence type="ECO:0000303" key="3">
    <source>
    </source>
</evidence>
<evidence type="ECO:0000305" key="4"/>
<sequence>MASLKKSLFLVLFLGLVSLSICEEEKRENEDEEEQEDDEQSEMKRGLWSNIKTAGKEAAKAALKAAGKAALGAVTDAVGEQ</sequence>
<gene>
    <name type="primary">DRG1</name>
</gene>
<comment type="function">
    <text evidence="4">Has antimicrobial activity.</text>
</comment>
<comment type="subcellular location">
    <subcellularLocation>
        <location evidence="4">Secreted</location>
    </subcellularLocation>
</comment>
<comment type="tissue specificity">
    <text>Expressed by the skin glands.</text>
</comment>
<comment type="similarity">
    <text evidence="4">Belongs to the frog skin active peptide (FSAP) family. Dermaseptin subfamily.</text>
</comment>
<comment type="online information" name="The antimicrobial peptide database">
    <link uri="https://wangapd3.com/database/query_output.php?ID=0936"/>
</comment>
<accession>Q90ZK3</accession>
<name>DRS7_PHYBI</name>
<reference key="1">
    <citation type="submission" date="2001-04" db="EMBL/GenBank/DDBJ databases">
        <authorList>
            <person name="Amiche M."/>
        </authorList>
    </citation>
    <scope>NUCLEOTIDE SEQUENCE [GENOMIC DNA]</scope>
    <source>
        <tissue>Skin</tissue>
    </source>
</reference>
<reference key="2">
    <citation type="journal article" date="2008" name="Peptides">
        <title>A consistent nomenclature of antimicrobial peptides isolated from frogs of the subfamily Phyllomedusinae.</title>
        <authorList>
            <person name="Amiche M."/>
            <person name="Ladram A."/>
            <person name="Nicolas P."/>
        </authorList>
    </citation>
    <scope>NOMENCLATURE</scope>
</reference>
<keyword id="KW-0027">Amidation</keyword>
<keyword id="KW-0878">Amphibian defense peptide</keyword>
<keyword id="KW-0044">Antibiotic</keyword>
<keyword id="KW-0929">Antimicrobial</keyword>
<keyword id="KW-0165">Cleavage on pair of basic residues</keyword>
<keyword id="KW-0964">Secreted</keyword>
<keyword id="KW-0732">Signal</keyword>
<proteinExistence type="evidence at transcript level"/>
<protein>
    <recommendedName>
        <fullName evidence="3">Dermaseptin-B7</fullName>
        <shortName evidence="3">DRS-B7</shortName>
    </recommendedName>
    <alternativeName>
        <fullName>Dermaseptin-gene related 1</fullName>
        <shortName>Dermaseptin DRG1</shortName>
    </alternativeName>
</protein>
<feature type="signal peptide" evidence="1">
    <location>
        <begin position="1"/>
        <end position="22"/>
    </location>
</feature>
<feature type="propeptide" id="PRO_0000007103" evidence="1">
    <location>
        <begin position="23"/>
        <end position="44"/>
    </location>
</feature>
<feature type="peptide" id="PRO_0000007104" description="Dermaseptin-B7">
    <location>
        <begin position="46"/>
        <end position="78"/>
    </location>
</feature>
<feature type="propeptide" id="PRO_0000007105">
    <location>
        <begin position="80"/>
        <end position="81"/>
    </location>
</feature>
<feature type="region of interest" description="Disordered" evidence="2">
    <location>
        <begin position="24"/>
        <end position="48"/>
    </location>
</feature>
<feature type="compositionally biased region" description="Acidic residues" evidence="2">
    <location>
        <begin position="30"/>
        <end position="40"/>
    </location>
</feature>
<feature type="modified residue" description="Valine amide" evidence="1">
    <location>
        <position position="78"/>
    </location>
</feature>
<dbReference type="EMBL" id="AJ312003">
    <property type="protein sequence ID" value="CAC37582.1"/>
    <property type="molecule type" value="Genomic_DNA"/>
</dbReference>
<dbReference type="SMR" id="Q90ZK3"/>
<dbReference type="GO" id="GO:0005576">
    <property type="term" value="C:extracellular region"/>
    <property type="evidence" value="ECO:0007669"/>
    <property type="project" value="UniProtKB-SubCell"/>
</dbReference>
<dbReference type="GO" id="GO:0042742">
    <property type="term" value="P:defense response to bacterium"/>
    <property type="evidence" value="ECO:0007669"/>
    <property type="project" value="UniProtKB-KW"/>
</dbReference>
<dbReference type="InterPro" id="IPR004275">
    <property type="entry name" value="Frog_antimicrobial_propeptide"/>
</dbReference>
<dbReference type="InterPro" id="IPR016322">
    <property type="entry name" value="FSAP"/>
</dbReference>
<dbReference type="Pfam" id="PF03032">
    <property type="entry name" value="FSAP_sig_propep"/>
    <property type="match status" value="1"/>
</dbReference>
<dbReference type="PIRSF" id="PIRSF001822">
    <property type="entry name" value="Dermaseptin_precursor"/>
    <property type="match status" value="1"/>
</dbReference>
<organism>
    <name type="scientific">Phyllomedusa bicolor</name>
    <name type="common">Two-colored leaf frog</name>
    <name type="synonym">Rana bicolor</name>
    <dbReference type="NCBI Taxonomy" id="8393"/>
    <lineage>
        <taxon>Eukaryota</taxon>
        <taxon>Metazoa</taxon>
        <taxon>Chordata</taxon>
        <taxon>Craniata</taxon>
        <taxon>Vertebrata</taxon>
        <taxon>Euteleostomi</taxon>
        <taxon>Amphibia</taxon>
        <taxon>Batrachia</taxon>
        <taxon>Anura</taxon>
        <taxon>Neobatrachia</taxon>
        <taxon>Hyloidea</taxon>
        <taxon>Hylidae</taxon>
        <taxon>Phyllomedusinae</taxon>
        <taxon>Phyllomedusa</taxon>
    </lineage>
</organism>